<protein>
    <recommendedName>
        <fullName evidence="1">Glucans biosynthesis protein D</fullName>
    </recommendedName>
</protein>
<gene>
    <name evidence="1" type="primary">mdoD</name>
    <name evidence="1" type="synonym">opgD</name>
    <name type="ordered locus">ESA_01717</name>
</gene>
<name>OPGD_CROS8</name>
<reference key="1">
    <citation type="journal article" date="2010" name="PLoS ONE">
        <title>Genome sequence of Cronobacter sakazakii BAA-894 and comparative genomic hybridization analysis with other Cronobacter species.</title>
        <authorList>
            <person name="Kucerova E."/>
            <person name="Clifton S.W."/>
            <person name="Xia X.Q."/>
            <person name="Long F."/>
            <person name="Porwollik S."/>
            <person name="Fulton L."/>
            <person name="Fronick C."/>
            <person name="Minx P."/>
            <person name="Kyung K."/>
            <person name="Warren W."/>
            <person name="Fulton R."/>
            <person name="Feng D."/>
            <person name="Wollam A."/>
            <person name="Shah N."/>
            <person name="Bhonagiri V."/>
            <person name="Nash W.E."/>
            <person name="Hallsworth-Pepin K."/>
            <person name="Wilson R.K."/>
            <person name="McClelland M."/>
            <person name="Forsythe S.J."/>
        </authorList>
    </citation>
    <scope>NUCLEOTIDE SEQUENCE [LARGE SCALE GENOMIC DNA]</scope>
    <source>
        <strain>ATCC BAA-894</strain>
    </source>
</reference>
<feature type="signal peptide" description="Tat-type signal" evidence="1">
    <location>
        <begin position="1"/>
        <end position="32"/>
    </location>
</feature>
<feature type="chain" id="PRO_1000064547" description="Glucans biosynthesis protein D">
    <location>
        <begin position="33"/>
        <end position="551"/>
    </location>
</feature>
<keyword id="KW-0574">Periplasm</keyword>
<keyword id="KW-1185">Reference proteome</keyword>
<keyword id="KW-0732">Signal</keyword>
<sequence>MNRRRFIKASLALAAACGTPGLATLFSRNAWAQESDIADGQTRAFDFSVLQAMASELAQKPWGGAPRPLPDTLAKLTPQAYNSIQYDAGHSLWNNIEGRQLDVQFFHVGMGFRRRVRMFSLDPATRQAREVHFRPELFNYHDAGVDTRQLEGQTDLGFAGFRAFKAPELARRDIVSFLGASYFRAVDSTFQYGLSARGLAVDTFTDTPEEFPDFTAFWFETPKAQDTTFVAYALLDSPSVTGAYKFIIHCESSQVIMEVENFLFARKDIKQLGIAPMTSMFSCGTNERRMCDTIHPQIHDSDRLAMWRGNGEWVCRPLNNPQRLQFNAFSDENPKGFGLLQTDHKFESYQDVMGWYNKRPSLWVEPRNRWGKGTVALMEIPTTGETLDNIVCFWQPEKPIRAGDKLNFQYRLYWSGDAPVRTPLARVYATRTGMGSFPEGWAPGENFPTQWSRRVAVDFVGGDLKGAAPRGIEPVITLSSGEAKQVEILYVEPFDGYRIQFDWYPTSDSVDPVEMRMFLRCQGEAISETWLWQYFPPAPDKRKYVDDRQMR</sequence>
<dbReference type="EMBL" id="CP000783">
    <property type="protein sequence ID" value="ABU76971.1"/>
    <property type="molecule type" value="Genomic_DNA"/>
</dbReference>
<dbReference type="RefSeq" id="WP_012124684.1">
    <property type="nucleotide sequence ID" value="NC_009778.1"/>
</dbReference>
<dbReference type="SMR" id="A7MLE5"/>
<dbReference type="KEGG" id="esa:ESA_01717"/>
<dbReference type="PATRIC" id="fig|290339.8.peg.1527"/>
<dbReference type="HOGENOM" id="CLU_023403_2_0_6"/>
<dbReference type="UniPathway" id="UPA00637"/>
<dbReference type="Proteomes" id="UP000000260">
    <property type="component" value="Chromosome"/>
</dbReference>
<dbReference type="GO" id="GO:0030288">
    <property type="term" value="C:outer membrane-bounded periplasmic space"/>
    <property type="evidence" value="ECO:0007669"/>
    <property type="project" value="TreeGrafter"/>
</dbReference>
<dbReference type="GO" id="GO:0030246">
    <property type="term" value="F:carbohydrate binding"/>
    <property type="evidence" value="ECO:0007669"/>
    <property type="project" value="InterPro"/>
</dbReference>
<dbReference type="GO" id="GO:0003824">
    <property type="term" value="F:catalytic activity"/>
    <property type="evidence" value="ECO:0007669"/>
    <property type="project" value="InterPro"/>
</dbReference>
<dbReference type="GO" id="GO:0051274">
    <property type="term" value="P:beta-glucan biosynthetic process"/>
    <property type="evidence" value="ECO:0007669"/>
    <property type="project" value="TreeGrafter"/>
</dbReference>
<dbReference type="Gene3D" id="2.70.98.10">
    <property type="match status" value="1"/>
</dbReference>
<dbReference type="Gene3D" id="2.60.40.10">
    <property type="entry name" value="Immunoglobulins"/>
    <property type="match status" value="1"/>
</dbReference>
<dbReference type="HAMAP" id="MF_01068">
    <property type="entry name" value="MdoD_OpgD"/>
    <property type="match status" value="1"/>
</dbReference>
<dbReference type="InterPro" id="IPR011013">
    <property type="entry name" value="Gal_mutarotase_sf_dom"/>
</dbReference>
<dbReference type="InterPro" id="IPR014718">
    <property type="entry name" value="GH-type_carb-bd"/>
</dbReference>
<dbReference type="InterPro" id="IPR023724">
    <property type="entry name" value="Glucan_biosyn_MdoD"/>
</dbReference>
<dbReference type="InterPro" id="IPR014438">
    <property type="entry name" value="Glucan_biosyn_MdoG/MdoD"/>
</dbReference>
<dbReference type="InterPro" id="IPR007444">
    <property type="entry name" value="Glucan_biosyn_MdoG_C"/>
</dbReference>
<dbReference type="InterPro" id="IPR013783">
    <property type="entry name" value="Ig-like_fold"/>
</dbReference>
<dbReference type="InterPro" id="IPR014756">
    <property type="entry name" value="Ig_E-set"/>
</dbReference>
<dbReference type="InterPro" id="IPR006311">
    <property type="entry name" value="TAT_signal"/>
</dbReference>
<dbReference type="InterPro" id="IPR019546">
    <property type="entry name" value="TAT_signal_bac_arc"/>
</dbReference>
<dbReference type="NCBIfam" id="TIGR01409">
    <property type="entry name" value="TAT_signal_seq"/>
    <property type="match status" value="1"/>
</dbReference>
<dbReference type="PANTHER" id="PTHR30504">
    <property type="entry name" value="GLUCANS BIOSYNTHESIS PROTEIN"/>
    <property type="match status" value="1"/>
</dbReference>
<dbReference type="PANTHER" id="PTHR30504:SF3">
    <property type="entry name" value="GLUCANS BIOSYNTHESIS PROTEIN D"/>
    <property type="match status" value="1"/>
</dbReference>
<dbReference type="Pfam" id="PF04349">
    <property type="entry name" value="MdoG"/>
    <property type="match status" value="1"/>
</dbReference>
<dbReference type="PIRSF" id="PIRSF006281">
    <property type="entry name" value="MdoG"/>
    <property type="match status" value="1"/>
</dbReference>
<dbReference type="SUPFAM" id="SSF81296">
    <property type="entry name" value="E set domains"/>
    <property type="match status" value="1"/>
</dbReference>
<dbReference type="SUPFAM" id="SSF74650">
    <property type="entry name" value="Galactose mutarotase-like"/>
    <property type="match status" value="1"/>
</dbReference>
<dbReference type="PROSITE" id="PS51318">
    <property type="entry name" value="TAT"/>
    <property type="match status" value="1"/>
</dbReference>
<accession>A7MLE5</accession>
<comment type="function">
    <text evidence="1">Probably involved in the control of the structural glucose backbone of osmoregulated periplasmic glucans (OPGs).</text>
</comment>
<comment type="pathway">
    <text evidence="1">Glycan metabolism; osmoregulated periplasmic glucan (OPG) biosynthesis.</text>
</comment>
<comment type="subcellular location">
    <subcellularLocation>
        <location evidence="1">Periplasm</location>
    </subcellularLocation>
</comment>
<comment type="PTM">
    <text>Predicted to be exported by the Tat system. The position of the signal peptide cleavage has not been experimentally proven.</text>
</comment>
<comment type="similarity">
    <text evidence="1">Belongs to the OpgD/OpgG family.</text>
</comment>
<proteinExistence type="inferred from homology"/>
<evidence type="ECO:0000255" key="1">
    <source>
        <dbReference type="HAMAP-Rule" id="MF_01068"/>
    </source>
</evidence>
<organism>
    <name type="scientific">Cronobacter sakazakii (strain ATCC BAA-894)</name>
    <name type="common">Enterobacter sakazakii</name>
    <dbReference type="NCBI Taxonomy" id="290339"/>
    <lineage>
        <taxon>Bacteria</taxon>
        <taxon>Pseudomonadati</taxon>
        <taxon>Pseudomonadota</taxon>
        <taxon>Gammaproteobacteria</taxon>
        <taxon>Enterobacterales</taxon>
        <taxon>Enterobacteriaceae</taxon>
        <taxon>Cronobacter</taxon>
    </lineage>
</organism>